<feature type="chain" id="PRO_1000137291" description="UPF0298 protein SPCG_0698">
    <location>
        <begin position="1"/>
        <end position="82"/>
    </location>
</feature>
<gene>
    <name type="ordered locus">SPCG_0698</name>
</gene>
<dbReference type="EMBL" id="CP001033">
    <property type="protein sequence ID" value="ACB89949.1"/>
    <property type="molecule type" value="Genomic_DNA"/>
</dbReference>
<dbReference type="RefSeq" id="WP_000462126.1">
    <property type="nucleotide sequence ID" value="NC_010582.1"/>
</dbReference>
<dbReference type="SMR" id="B2IND1"/>
<dbReference type="KEGG" id="spw:SPCG_0698"/>
<dbReference type="HOGENOM" id="CLU_159890_1_0_9"/>
<dbReference type="GO" id="GO:0005737">
    <property type="term" value="C:cytoplasm"/>
    <property type="evidence" value="ECO:0007669"/>
    <property type="project" value="UniProtKB-SubCell"/>
</dbReference>
<dbReference type="HAMAP" id="MF_01126">
    <property type="entry name" value="UPF0298"/>
    <property type="match status" value="1"/>
</dbReference>
<dbReference type="InterPro" id="IPR016979">
    <property type="entry name" value="DUF2129"/>
</dbReference>
<dbReference type="NCBIfam" id="NF002631">
    <property type="entry name" value="PRK02302.1"/>
    <property type="match status" value="1"/>
</dbReference>
<dbReference type="Pfam" id="PF09902">
    <property type="entry name" value="DUF2129"/>
    <property type="match status" value="1"/>
</dbReference>
<dbReference type="PIRSF" id="PIRSF031653">
    <property type="entry name" value="UCP031653"/>
    <property type="match status" value="1"/>
</dbReference>
<organism>
    <name type="scientific">Streptococcus pneumoniae (strain CGSP14)</name>
    <dbReference type="NCBI Taxonomy" id="516950"/>
    <lineage>
        <taxon>Bacteria</taxon>
        <taxon>Bacillati</taxon>
        <taxon>Bacillota</taxon>
        <taxon>Bacilli</taxon>
        <taxon>Lactobacillales</taxon>
        <taxon>Streptococcaceae</taxon>
        <taxon>Streptococcus</taxon>
    </lineage>
</organism>
<keyword id="KW-0963">Cytoplasm</keyword>
<protein>
    <recommendedName>
        <fullName evidence="1">UPF0298 protein SPCG_0698</fullName>
    </recommendedName>
</protein>
<comment type="subcellular location">
    <subcellularLocation>
        <location evidence="1">Cytoplasm</location>
    </subcellularLocation>
</comment>
<comment type="similarity">
    <text evidence="1">Belongs to the UPF0298 family.</text>
</comment>
<proteinExistence type="inferred from homology"/>
<evidence type="ECO:0000255" key="1">
    <source>
        <dbReference type="HAMAP-Rule" id="MF_01126"/>
    </source>
</evidence>
<accession>B2IND1</accession>
<name>Y698_STRPS</name>
<sequence length="82" mass="9941">MFEKVNRSGLIIYLYYNRDAKKLQDYGDITYHSKKHRYLQLYVPTQEVEQLVGRLSKEKFIKKVRVCHIQELETPFVGNLYR</sequence>
<reference key="1">
    <citation type="journal article" date="2009" name="BMC Genomics">
        <title>Genome evolution driven by host adaptations results in a more virulent and antimicrobial-resistant Streptococcus pneumoniae serotype 14.</title>
        <authorList>
            <person name="Ding F."/>
            <person name="Tang P."/>
            <person name="Hsu M.-H."/>
            <person name="Cui P."/>
            <person name="Hu S."/>
            <person name="Yu J."/>
            <person name="Chiu C.-H."/>
        </authorList>
    </citation>
    <scope>NUCLEOTIDE SEQUENCE [LARGE SCALE GENOMIC DNA]</scope>
    <source>
        <strain>CGSP14</strain>
    </source>
</reference>